<comment type="function">
    <text evidence="2">Acyl-CoA dehydrogenase, that exhibits maximal activity towards saturated C22-CoA. Probably participates in beta-oxydation and energy production but could also play a role in the metabolism of specific fatty acids to control fatty acids composition of cellular lipids in brain.</text>
</comment>
<comment type="catalytic activity">
    <reaction evidence="2">
        <text>a 2,3-saturated acyl-CoA + oxidized [electron-transfer flavoprotein] + H(+) = a (2E)-enoyl-CoA + reduced [electron-transfer flavoprotein]</text>
        <dbReference type="Rhea" id="RHEA:44704"/>
        <dbReference type="Rhea" id="RHEA-COMP:10685"/>
        <dbReference type="Rhea" id="RHEA-COMP:10686"/>
        <dbReference type="ChEBI" id="CHEBI:15378"/>
        <dbReference type="ChEBI" id="CHEBI:57692"/>
        <dbReference type="ChEBI" id="CHEBI:58307"/>
        <dbReference type="ChEBI" id="CHEBI:58856"/>
        <dbReference type="ChEBI" id="CHEBI:65111"/>
    </reaction>
    <physiologicalReaction direction="left-to-right" evidence="2">
        <dbReference type="Rhea" id="RHEA:44705"/>
    </physiologicalReaction>
</comment>
<comment type="catalytic activity">
    <reaction evidence="2">
        <text>docosanoyl-CoA + oxidized [electron-transfer flavoprotein] + H(+) = (2E)-docosenoyl-CoA + reduced [electron-transfer flavoprotein]</text>
        <dbReference type="Rhea" id="RHEA:47228"/>
        <dbReference type="Rhea" id="RHEA-COMP:10685"/>
        <dbReference type="Rhea" id="RHEA-COMP:10686"/>
        <dbReference type="ChEBI" id="CHEBI:15378"/>
        <dbReference type="ChEBI" id="CHEBI:57692"/>
        <dbReference type="ChEBI" id="CHEBI:58307"/>
        <dbReference type="ChEBI" id="CHEBI:65059"/>
        <dbReference type="ChEBI" id="CHEBI:74692"/>
    </reaction>
    <physiologicalReaction direction="left-to-right" evidence="2">
        <dbReference type="Rhea" id="RHEA:47229"/>
    </physiologicalReaction>
</comment>
<comment type="catalytic activity">
    <reaction evidence="2">
        <text>tetracosanoyl-CoA + oxidized [electron-transfer flavoprotein] + H(+) = (2E)-tetracosenoyl-CoA + reduced [electron-transfer flavoprotein]</text>
        <dbReference type="Rhea" id="RHEA:47232"/>
        <dbReference type="Rhea" id="RHEA-COMP:10685"/>
        <dbReference type="Rhea" id="RHEA-COMP:10686"/>
        <dbReference type="ChEBI" id="CHEBI:15378"/>
        <dbReference type="ChEBI" id="CHEBI:57692"/>
        <dbReference type="ChEBI" id="CHEBI:58307"/>
        <dbReference type="ChEBI" id="CHEBI:65052"/>
        <dbReference type="ChEBI" id="CHEBI:74693"/>
    </reaction>
    <physiologicalReaction direction="left-to-right" evidence="2">
        <dbReference type="Rhea" id="RHEA:47233"/>
    </physiologicalReaction>
</comment>
<comment type="catalytic activity">
    <reaction evidence="2">
        <text>eicosanoyl-CoA + oxidized [electron-transfer flavoprotein] + H(+) = (2E)-eicosenoyl-CoA + reduced [electron-transfer flavoprotein]</text>
        <dbReference type="Rhea" id="RHEA:47236"/>
        <dbReference type="Rhea" id="RHEA-COMP:10685"/>
        <dbReference type="Rhea" id="RHEA-COMP:10686"/>
        <dbReference type="ChEBI" id="CHEBI:15378"/>
        <dbReference type="ChEBI" id="CHEBI:57380"/>
        <dbReference type="ChEBI" id="CHEBI:57692"/>
        <dbReference type="ChEBI" id="CHEBI:58307"/>
        <dbReference type="ChEBI" id="CHEBI:74691"/>
    </reaction>
    <physiologicalReaction direction="left-to-right" evidence="2">
        <dbReference type="Rhea" id="RHEA:47237"/>
    </physiologicalReaction>
</comment>
<comment type="catalytic activity">
    <reaction evidence="2">
        <text>hexacosanoyl-CoA + oxidized [electron-transfer flavoprotein] + H(+) = (2E)-hexacosenoyl-CoA + reduced [electron-transfer flavoprotein]</text>
        <dbReference type="Rhea" id="RHEA:48216"/>
        <dbReference type="Rhea" id="RHEA-COMP:10685"/>
        <dbReference type="Rhea" id="RHEA-COMP:10686"/>
        <dbReference type="ChEBI" id="CHEBI:15378"/>
        <dbReference type="ChEBI" id="CHEBI:57692"/>
        <dbReference type="ChEBI" id="CHEBI:58307"/>
        <dbReference type="ChEBI" id="CHEBI:64868"/>
        <dbReference type="ChEBI" id="CHEBI:74281"/>
    </reaction>
    <physiologicalReaction direction="left-to-right" evidence="2">
        <dbReference type="Rhea" id="RHEA:48217"/>
    </physiologicalReaction>
</comment>
<comment type="catalytic activity">
    <reaction evidence="2">
        <text>tricosanoyl-CoA + oxidized [electron-transfer flavoprotein] + H(+) = (2E)-tricosenoyl-CoA + reduced [electron-transfer flavoprotein]</text>
        <dbReference type="Rhea" id="RHEA:48220"/>
        <dbReference type="Rhea" id="RHEA-COMP:10685"/>
        <dbReference type="Rhea" id="RHEA-COMP:10686"/>
        <dbReference type="ChEBI" id="CHEBI:15378"/>
        <dbReference type="ChEBI" id="CHEBI:57692"/>
        <dbReference type="ChEBI" id="CHEBI:58307"/>
        <dbReference type="ChEBI" id="CHEBI:90118"/>
        <dbReference type="ChEBI" id="CHEBI:90119"/>
    </reaction>
    <physiologicalReaction direction="left-to-right" evidence="2">
        <dbReference type="Rhea" id="RHEA:48221"/>
    </physiologicalReaction>
</comment>
<comment type="cofactor">
    <cofactor evidence="2">
        <name>FAD</name>
        <dbReference type="ChEBI" id="CHEBI:57692"/>
    </cofactor>
</comment>
<comment type="pathway">
    <text evidence="2">Lipid metabolism; fatty acid beta-oxidation.</text>
</comment>
<comment type="subunit">
    <text evidence="2">Homodimer.</text>
</comment>
<comment type="subcellular location">
    <subcellularLocation>
        <location evidence="3">Peroxisome</location>
    </subcellularLocation>
    <subcellularLocation>
        <location evidence="2">Mitochondrion membrane</location>
    </subcellularLocation>
</comment>
<comment type="similarity">
    <text evidence="4">Belongs to the acyl-CoA dehydrogenase family.</text>
</comment>
<dbReference type="EC" id="1.3.8.-" evidence="2"/>
<dbReference type="EMBL" id="AJ721053">
    <property type="protein sequence ID" value="CAG32712.1"/>
    <property type="molecule type" value="mRNA"/>
</dbReference>
<dbReference type="RefSeq" id="NP_001006367.1">
    <property type="nucleotide sequence ID" value="NM_001006367.1"/>
</dbReference>
<dbReference type="SMR" id="Q5ZHT1"/>
<dbReference type="FunCoup" id="Q5ZHT1">
    <property type="interactions" value="159"/>
</dbReference>
<dbReference type="STRING" id="9031.ENSGALP00000047835"/>
<dbReference type="PaxDb" id="9031-ENSGALP00000019106"/>
<dbReference type="KEGG" id="gga:420689"/>
<dbReference type="VEuPathDB" id="HostDB:geneid_420689"/>
<dbReference type="eggNOG" id="KOG1469">
    <property type="taxonomic scope" value="Eukaryota"/>
</dbReference>
<dbReference type="InParanoid" id="Q5ZHT1"/>
<dbReference type="OrthoDB" id="434771at2759"/>
<dbReference type="PhylomeDB" id="Q5ZHT1"/>
<dbReference type="UniPathway" id="UPA00659"/>
<dbReference type="PRO" id="PR:Q5ZHT1"/>
<dbReference type="Proteomes" id="UP000000539">
    <property type="component" value="Unassembled WGS sequence"/>
</dbReference>
<dbReference type="GO" id="GO:0005737">
    <property type="term" value="C:cytoplasm"/>
    <property type="evidence" value="ECO:0000318"/>
    <property type="project" value="GO_Central"/>
</dbReference>
<dbReference type="GO" id="GO:0031966">
    <property type="term" value="C:mitochondrial membrane"/>
    <property type="evidence" value="ECO:0007669"/>
    <property type="project" value="UniProtKB-SubCell"/>
</dbReference>
<dbReference type="GO" id="GO:0005739">
    <property type="term" value="C:mitochondrion"/>
    <property type="evidence" value="ECO:0000318"/>
    <property type="project" value="GO_Central"/>
</dbReference>
<dbReference type="GO" id="GO:0005777">
    <property type="term" value="C:peroxisome"/>
    <property type="evidence" value="ECO:0007669"/>
    <property type="project" value="UniProtKB-SubCell"/>
</dbReference>
<dbReference type="GO" id="GO:0003995">
    <property type="term" value="F:acyl-CoA dehydrogenase activity"/>
    <property type="evidence" value="ECO:0000318"/>
    <property type="project" value="GO_Central"/>
</dbReference>
<dbReference type="GO" id="GO:0050660">
    <property type="term" value="F:flavin adenine dinucleotide binding"/>
    <property type="evidence" value="ECO:0007669"/>
    <property type="project" value="InterPro"/>
</dbReference>
<dbReference type="GO" id="GO:0033539">
    <property type="term" value="P:fatty acid beta-oxidation using acyl-CoA dehydrogenase"/>
    <property type="evidence" value="ECO:0000318"/>
    <property type="project" value="GO_Central"/>
</dbReference>
<dbReference type="CDD" id="cd05154">
    <property type="entry name" value="ACAD10_11_N-like"/>
    <property type="match status" value="1"/>
</dbReference>
<dbReference type="CDD" id="cd01155">
    <property type="entry name" value="ACAD_FadE2"/>
    <property type="match status" value="1"/>
</dbReference>
<dbReference type="FunFam" id="2.40.110.10:FF:000002">
    <property type="entry name" value="Acyl-CoA dehydrogenase fadE12"/>
    <property type="match status" value="1"/>
</dbReference>
<dbReference type="Gene3D" id="3.90.1200.10">
    <property type="match status" value="1"/>
</dbReference>
<dbReference type="Gene3D" id="1.10.540.10">
    <property type="entry name" value="Acyl-CoA dehydrogenase/oxidase, N-terminal domain"/>
    <property type="match status" value="1"/>
</dbReference>
<dbReference type="Gene3D" id="2.40.110.10">
    <property type="entry name" value="Butyryl-CoA Dehydrogenase, subunit A, domain 2"/>
    <property type="match status" value="1"/>
</dbReference>
<dbReference type="Gene3D" id="1.20.140.10">
    <property type="entry name" value="Butyryl-CoA Dehydrogenase, subunit A, domain 3"/>
    <property type="match status" value="1"/>
</dbReference>
<dbReference type="Gene3D" id="3.30.200.20">
    <property type="entry name" value="Phosphorylase Kinase, domain 1"/>
    <property type="match status" value="1"/>
</dbReference>
<dbReference type="InterPro" id="IPR041726">
    <property type="entry name" value="ACAD10_11_N"/>
</dbReference>
<dbReference type="InterPro" id="IPR050741">
    <property type="entry name" value="Acyl-CoA_dehydrogenase"/>
</dbReference>
<dbReference type="InterPro" id="IPR006091">
    <property type="entry name" value="Acyl-CoA_Oxase/DH_mid-dom"/>
</dbReference>
<dbReference type="InterPro" id="IPR046373">
    <property type="entry name" value="Acyl-CoA_Oxase/DH_mid-dom_sf"/>
</dbReference>
<dbReference type="InterPro" id="IPR036250">
    <property type="entry name" value="AcylCo_DH-like_C"/>
</dbReference>
<dbReference type="InterPro" id="IPR009075">
    <property type="entry name" value="AcylCo_DH/oxidase_C"/>
</dbReference>
<dbReference type="InterPro" id="IPR013786">
    <property type="entry name" value="AcylCoA_DH/ox_N"/>
</dbReference>
<dbReference type="InterPro" id="IPR037069">
    <property type="entry name" value="AcylCoA_DH/ox_N_sf"/>
</dbReference>
<dbReference type="InterPro" id="IPR009100">
    <property type="entry name" value="AcylCoA_DH/oxidase_NM_dom_sf"/>
</dbReference>
<dbReference type="InterPro" id="IPR002575">
    <property type="entry name" value="Aminoglycoside_PTrfase"/>
</dbReference>
<dbReference type="InterPro" id="IPR011009">
    <property type="entry name" value="Kinase-like_dom_sf"/>
</dbReference>
<dbReference type="PANTHER" id="PTHR48083:SF13">
    <property type="entry name" value="ACYL-COA DEHYDROGENASE FAMILY MEMBER 11"/>
    <property type="match status" value="1"/>
</dbReference>
<dbReference type="PANTHER" id="PTHR48083">
    <property type="entry name" value="MEDIUM-CHAIN SPECIFIC ACYL-COA DEHYDROGENASE, MITOCHONDRIAL-RELATED"/>
    <property type="match status" value="1"/>
</dbReference>
<dbReference type="Pfam" id="PF00441">
    <property type="entry name" value="Acyl-CoA_dh_1"/>
    <property type="match status" value="1"/>
</dbReference>
<dbReference type="Pfam" id="PF02770">
    <property type="entry name" value="Acyl-CoA_dh_M"/>
    <property type="match status" value="1"/>
</dbReference>
<dbReference type="Pfam" id="PF02771">
    <property type="entry name" value="Acyl-CoA_dh_N"/>
    <property type="match status" value="1"/>
</dbReference>
<dbReference type="Pfam" id="PF01636">
    <property type="entry name" value="APH"/>
    <property type="match status" value="1"/>
</dbReference>
<dbReference type="SUPFAM" id="SSF47203">
    <property type="entry name" value="Acyl-CoA dehydrogenase C-terminal domain-like"/>
    <property type="match status" value="1"/>
</dbReference>
<dbReference type="SUPFAM" id="SSF56645">
    <property type="entry name" value="Acyl-CoA dehydrogenase NM domain-like"/>
    <property type="match status" value="1"/>
</dbReference>
<dbReference type="SUPFAM" id="SSF56112">
    <property type="entry name" value="Protein kinase-like (PK-like)"/>
    <property type="match status" value="1"/>
</dbReference>
<protein>
    <recommendedName>
        <fullName>Acyl-CoA dehydrogenase family member 11</fullName>
        <shortName>ACAD-11</shortName>
        <ecNumber evidence="2">1.3.8.-</ecNumber>
    </recommendedName>
</protein>
<keyword id="KW-0274">FAD</keyword>
<keyword id="KW-0276">Fatty acid metabolism</keyword>
<keyword id="KW-0285">Flavoprotein</keyword>
<keyword id="KW-0443">Lipid metabolism</keyword>
<keyword id="KW-0472">Membrane</keyword>
<keyword id="KW-0496">Mitochondrion</keyword>
<keyword id="KW-0560">Oxidoreductase</keyword>
<keyword id="KW-0576">Peroxisome</keyword>
<keyword id="KW-1185">Reference proteome</keyword>
<organism>
    <name type="scientific">Gallus gallus</name>
    <name type="common">Chicken</name>
    <dbReference type="NCBI Taxonomy" id="9031"/>
    <lineage>
        <taxon>Eukaryota</taxon>
        <taxon>Metazoa</taxon>
        <taxon>Chordata</taxon>
        <taxon>Craniata</taxon>
        <taxon>Vertebrata</taxon>
        <taxon>Euteleostomi</taxon>
        <taxon>Archelosauria</taxon>
        <taxon>Archosauria</taxon>
        <taxon>Dinosauria</taxon>
        <taxon>Saurischia</taxon>
        <taxon>Theropoda</taxon>
        <taxon>Coelurosauria</taxon>
        <taxon>Aves</taxon>
        <taxon>Neognathae</taxon>
        <taxon>Galloanserae</taxon>
        <taxon>Galliformes</taxon>
        <taxon>Phasianidae</taxon>
        <taxon>Phasianinae</taxon>
        <taxon>Gallus</taxon>
    </lineage>
</organism>
<proteinExistence type="evidence at transcript level"/>
<gene>
    <name type="primary">ACAD11</name>
    <name type="ORF">RCJMB04_33j3</name>
</gene>
<evidence type="ECO:0000250" key="1"/>
<evidence type="ECO:0000250" key="2">
    <source>
        <dbReference type="UniProtKB" id="Q709F0"/>
    </source>
</evidence>
<evidence type="ECO:0000250" key="3">
    <source>
        <dbReference type="UniProtKB" id="Q80XL6"/>
    </source>
</evidence>
<evidence type="ECO:0000305" key="4"/>
<accession>Q5ZHT1</accession>
<sequence length="777" mass="87002">MAVEPGTSEVRRQHRFDQGSLERYLCRCLPGFPQQPAGALSVRQYSSGQSNPTFYLQKGGQAYVLRKKPHGPLLPNAHKVDREYHVQKALFSAGFPVPEPLLYCSDVSVIGTEFYVMQHVQGRIFRDASLPEVGPAERSALYLAIETLAQLHSFDLRSLGLQGYGRGPGYCRRQVSTWKRQYDAAAHTDIPAMNELAKWLANNLPPDDDEEALIHGDFRIDNIIFHPTEARVLAVLDWELSTTGHPLADLAYATQFYFWPTSLNVLGQGSVFNFKGTIENPSFEELISIYCRCRGISTTIPNLNFFLALSYFKMAGISQGVYARYLIGNASAESSHEFAKMVKPLAEKGLELSKRLSFSSIQHNTSGELFYQSRKGQEVLLKVKQFMKQHVYPAEKEIAEYYAKHGNTEERWKKPPVLERLKEMAKAEGLWNLFLPAVSSLSQLDYALIAEETGKRFFAPEVFNCQAPDTGNMEVLHLYGTEEQKKEWLEPLLEGKISSCFCMTEPDVASSDATNMQCSIERDGNSYVINGKKWWSSGAGNPNCKVAIVMGKTKNSSASRYKQHSMIIVPMDTPGVRLIRPLSVFGYIDEIHGGHFEVHFNDVRVPVSNMILGEGRGFEIAQGRLGPGRIHHCMRSIGAAETALEILCQRAAQRETFGKKLYHHEVVAHWIAECRLSIEQARLLTLKTASKIDTLGNRKARKEVAMTKVVVPRAVLKVIDCAIQVCGGAGVSQDFPLASMFAYIRTLRVADGPDEVHLSTIARWELLDQSKKLTAKI</sequence>
<feature type="chain" id="PRO_0000254148" description="Acyl-CoA dehydrogenase family member 11">
    <location>
        <begin position="1"/>
        <end position="777"/>
    </location>
</feature>
<feature type="binding site" description="in other chain" evidence="1">
    <location>
        <begin position="501"/>
        <end position="511"/>
    </location>
    <ligand>
        <name>FAD</name>
        <dbReference type="ChEBI" id="CHEBI:57692"/>
        <note>ligand shared between dimeric partners</note>
    </ligand>
</feature>
<feature type="binding site" description="in other chain" evidence="1">
    <location>
        <begin position="509"/>
        <end position="511"/>
    </location>
    <ligand>
        <name>FAD</name>
        <dbReference type="ChEBI" id="CHEBI:57692"/>
        <note>ligand shared between dimeric partners</note>
    </ligand>
</feature>
<feature type="binding site" evidence="1">
    <location>
        <position position="511"/>
    </location>
    <ligand>
        <name>substrate</name>
    </ligand>
</feature>
<feature type="binding site" description="in other chain" evidence="1">
    <location>
        <begin position="535"/>
        <end position="537"/>
    </location>
    <ligand>
        <name>FAD</name>
        <dbReference type="ChEBI" id="CHEBI:57692"/>
        <note>ligand shared between dimeric partners</note>
    </ligand>
</feature>
<feature type="binding site" description="in other chain" evidence="1">
    <location>
        <position position="537"/>
    </location>
    <ligand>
        <name>FAD</name>
        <dbReference type="ChEBI" id="CHEBI:57692"/>
        <note>ligand shared between dimeric partners</note>
    </ligand>
</feature>
<feature type="binding site" evidence="1">
    <location>
        <begin position="626"/>
        <end position="629"/>
    </location>
    <ligand>
        <name>substrate</name>
    </ligand>
</feature>
<feature type="binding site" evidence="1">
    <location>
        <position position="654"/>
    </location>
    <ligand>
        <name>FAD</name>
        <dbReference type="ChEBI" id="CHEBI:57692"/>
        <note>ligand shared between dimeric partners</note>
    </ligand>
</feature>
<feature type="binding site" evidence="1">
    <location>
        <begin position="724"/>
        <end position="728"/>
    </location>
    <ligand>
        <name>FAD</name>
        <dbReference type="ChEBI" id="CHEBI:57692"/>
        <note>ligand shared between dimeric partners</note>
    </ligand>
</feature>
<feature type="binding site" description="in other chain" evidence="1">
    <location>
        <position position="724"/>
    </location>
    <ligand>
        <name>FAD</name>
        <dbReference type="ChEBI" id="CHEBI:57692"/>
        <note>ligand shared between dimeric partners</note>
    </ligand>
</feature>
<feature type="binding site" evidence="1">
    <location>
        <position position="752"/>
    </location>
    <ligand>
        <name>substrate</name>
    </ligand>
</feature>
<feature type="binding site" description="in other chain" evidence="1">
    <location>
        <begin position="753"/>
        <end position="755"/>
    </location>
    <ligand>
        <name>FAD</name>
        <dbReference type="ChEBI" id="CHEBI:57692"/>
        <note>ligand shared between dimeric partners</note>
    </ligand>
</feature>
<feature type="binding site" description="in other chain" evidence="1">
    <location>
        <position position="755"/>
    </location>
    <ligand>
        <name>FAD</name>
        <dbReference type="ChEBI" id="CHEBI:57692"/>
        <note>ligand shared between dimeric partners</note>
    </ligand>
</feature>
<name>ACD11_CHICK</name>
<reference key="1">
    <citation type="journal article" date="2005" name="Genome Biol.">
        <title>Full-length cDNAs from chicken bursal lymphocytes to facilitate gene function analysis.</title>
        <authorList>
            <person name="Caldwell R.B."/>
            <person name="Kierzek A.M."/>
            <person name="Arakawa H."/>
            <person name="Bezzubov Y."/>
            <person name="Zaim J."/>
            <person name="Fiedler P."/>
            <person name="Kutter S."/>
            <person name="Blagodatski A."/>
            <person name="Kostovska D."/>
            <person name="Koter M."/>
            <person name="Plachy J."/>
            <person name="Carninci P."/>
            <person name="Hayashizaki Y."/>
            <person name="Buerstedde J.-M."/>
        </authorList>
    </citation>
    <scope>NUCLEOTIDE SEQUENCE [LARGE SCALE MRNA]</scope>
    <source>
        <strain>CB</strain>
        <tissue>Bursa of Fabricius</tissue>
    </source>
</reference>